<gene>
    <name type="primary">rpl30e</name>
    <name type="ordered locus">MTH_1053</name>
</gene>
<proteinExistence type="inferred from homology"/>
<feature type="chain" id="PRO_0000146152" description="Large ribosomal subunit protein eL30">
    <location>
        <begin position="1"/>
        <end position="98"/>
    </location>
</feature>
<dbReference type="EMBL" id="AE000666">
    <property type="protein sequence ID" value="AAB85544.1"/>
    <property type="molecule type" value="Genomic_DNA"/>
</dbReference>
<dbReference type="PIR" id="A69007">
    <property type="entry name" value="A69007"/>
</dbReference>
<dbReference type="RefSeq" id="WP_010876679.1">
    <property type="nucleotide sequence ID" value="NC_000916.1"/>
</dbReference>
<dbReference type="SMR" id="O27127"/>
<dbReference type="FunCoup" id="O27127">
    <property type="interactions" value="154"/>
</dbReference>
<dbReference type="STRING" id="187420.MTH_1053"/>
<dbReference type="PaxDb" id="187420-MTH_1053"/>
<dbReference type="EnsemblBacteria" id="AAB85544">
    <property type="protein sequence ID" value="AAB85544"/>
    <property type="gene ID" value="MTH_1053"/>
</dbReference>
<dbReference type="KEGG" id="mth:MTH_1053"/>
<dbReference type="PATRIC" id="fig|187420.15.peg.1032"/>
<dbReference type="HOGENOM" id="CLU_130502_1_0_2"/>
<dbReference type="InParanoid" id="O27127"/>
<dbReference type="Proteomes" id="UP000005223">
    <property type="component" value="Chromosome"/>
</dbReference>
<dbReference type="GO" id="GO:0022625">
    <property type="term" value="C:cytosolic large ribosomal subunit"/>
    <property type="evidence" value="ECO:0007669"/>
    <property type="project" value="InterPro"/>
</dbReference>
<dbReference type="GO" id="GO:0003723">
    <property type="term" value="F:RNA binding"/>
    <property type="evidence" value="ECO:0007669"/>
    <property type="project" value="InterPro"/>
</dbReference>
<dbReference type="GO" id="GO:0003735">
    <property type="term" value="F:structural constituent of ribosome"/>
    <property type="evidence" value="ECO:0007669"/>
    <property type="project" value="InterPro"/>
</dbReference>
<dbReference type="GO" id="GO:0006412">
    <property type="term" value="P:translation"/>
    <property type="evidence" value="ECO:0007669"/>
    <property type="project" value="UniProtKB-UniRule"/>
</dbReference>
<dbReference type="Gene3D" id="3.30.1330.30">
    <property type="match status" value="1"/>
</dbReference>
<dbReference type="HAMAP" id="MF_00481">
    <property type="entry name" value="Ribosomal_eL30"/>
    <property type="match status" value="1"/>
</dbReference>
<dbReference type="InterPro" id="IPR000231">
    <property type="entry name" value="Ribosomal_eL30"/>
</dbReference>
<dbReference type="InterPro" id="IPR039109">
    <property type="entry name" value="Ribosomal_eL30-like"/>
</dbReference>
<dbReference type="InterPro" id="IPR029064">
    <property type="entry name" value="Ribosomal_eL30-like_sf"/>
</dbReference>
<dbReference type="InterPro" id="IPR022991">
    <property type="entry name" value="Ribosomal_eL30_CS"/>
</dbReference>
<dbReference type="InterPro" id="IPR004038">
    <property type="entry name" value="Ribosomal_eL8/eL30/eS12/Gad45"/>
</dbReference>
<dbReference type="NCBIfam" id="NF002172">
    <property type="entry name" value="PRK01018.1"/>
    <property type="match status" value="1"/>
</dbReference>
<dbReference type="PANTHER" id="PTHR11449">
    <property type="entry name" value="RIBOSOMAL PROTEIN L30"/>
    <property type="match status" value="1"/>
</dbReference>
<dbReference type="Pfam" id="PF01248">
    <property type="entry name" value="Ribosomal_L7Ae"/>
    <property type="match status" value="1"/>
</dbReference>
<dbReference type="SUPFAM" id="SSF55315">
    <property type="entry name" value="L30e-like"/>
    <property type="match status" value="1"/>
</dbReference>
<dbReference type="PROSITE" id="PS00709">
    <property type="entry name" value="RIBOSOMAL_L30E_1"/>
    <property type="match status" value="1"/>
</dbReference>
<dbReference type="PROSITE" id="PS00993">
    <property type="entry name" value="RIBOSOMAL_L30E_2"/>
    <property type="match status" value="1"/>
</dbReference>
<comment type="similarity">
    <text evidence="1">Belongs to the eukaryotic ribosomal protein eL30 family.</text>
</comment>
<reference key="1">
    <citation type="journal article" date="1997" name="J. Bacteriol.">
        <title>Complete genome sequence of Methanobacterium thermoautotrophicum deltaH: functional analysis and comparative genomics.</title>
        <authorList>
            <person name="Smith D.R."/>
            <person name="Doucette-Stamm L.A."/>
            <person name="Deloughery C."/>
            <person name="Lee H.-M."/>
            <person name="Dubois J."/>
            <person name="Aldredge T."/>
            <person name="Bashirzadeh R."/>
            <person name="Blakely D."/>
            <person name="Cook R."/>
            <person name="Gilbert K."/>
            <person name="Harrison D."/>
            <person name="Hoang L."/>
            <person name="Keagle P."/>
            <person name="Lumm W."/>
            <person name="Pothier B."/>
            <person name="Qiu D."/>
            <person name="Spadafora R."/>
            <person name="Vicare R."/>
            <person name="Wang Y."/>
            <person name="Wierzbowski J."/>
            <person name="Gibson R."/>
            <person name="Jiwani N."/>
            <person name="Caruso A."/>
            <person name="Bush D."/>
            <person name="Safer H."/>
            <person name="Patwell D."/>
            <person name="Prabhakar S."/>
            <person name="McDougall S."/>
            <person name="Shimer G."/>
            <person name="Goyal A."/>
            <person name="Pietrovski S."/>
            <person name="Church G.M."/>
            <person name="Daniels C.J."/>
            <person name="Mao J.-I."/>
            <person name="Rice P."/>
            <person name="Noelling J."/>
            <person name="Reeve J.N."/>
        </authorList>
    </citation>
    <scope>NUCLEOTIDE SEQUENCE [LARGE SCALE GENOMIC DNA]</scope>
    <source>
        <strain>ATCC 29096 / DSM 1053 / JCM 10044 / NBRC 100330 / Delta H</strain>
    </source>
</reference>
<organism>
    <name type="scientific">Methanothermobacter thermautotrophicus (strain ATCC 29096 / DSM 1053 / JCM 10044 / NBRC 100330 / Delta H)</name>
    <name type="common">Methanobacterium thermoautotrophicum</name>
    <dbReference type="NCBI Taxonomy" id="187420"/>
    <lineage>
        <taxon>Archaea</taxon>
        <taxon>Methanobacteriati</taxon>
        <taxon>Methanobacteriota</taxon>
        <taxon>Methanomada group</taxon>
        <taxon>Methanobacteria</taxon>
        <taxon>Methanobacteriales</taxon>
        <taxon>Methanobacteriaceae</taxon>
        <taxon>Methanothermobacter</taxon>
    </lineage>
</organism>
<sequence>MDIDRGIRVAVDTGNVILGSKRTIQSLKLGKGKLVVMASNIPEDLKEDIEYYAKLSEIPVYTHEGTSVELGSVCGKPFTVGALLIQDPGDSTILEMVG</sequence>
<evidence type="ECO:0000305" key="1"/>
<keyword id="KW-1185">Reference proteome</keyword>
<keyword id="KW-0687">Ribonucleoprotein</keyword>
<keyword id="KW-0689">Ribosomal protein</keyword>
<accession>O27127</accession>
<protein>
    <recommendedName>
        <fullName evidence="1">Large ribosomal subunit protein eL30</fullName>
    </recommendedName>
    <alternativeName>
        <fullName>50S ribosomal protein L30e</fullName>
    </alternativeName>
</protein>
<name>RL30E_METTH</name>